<comment type="function">
    <text evidence="1">Conversion of NADPH, generated by peripheral catabolic pathways, to NADH, which can enter the respiratory chain for energy generation.</text>
</comment>
<comment type="catalytic activity">
    <reaction evidence="1">
        <text>NAD(+) + NADPH = NADH + NADP(+)</text>
        <dbReference type="Rhea" id="RHEA:11692"/>
        <dbReference type="ChEBI" id="CHEBI:57540"/>
        <dbReference type="ChEBI" id="CHEBI:57783"/>
        <dbReference type="ChEBI" id="CHEBI:57945"/>
        <dbReference type="ChEBI" id="CHEBI:58349"/>
        <dbReference type="EC" id="1.6.1.1"/>
    </reaction>
</comment>
<comment type="cofactor">
    <cofactor evidence="1">
        <name>FAD</name>
        <dbReference type="ChEBI" id="CHEBI:57692"/>
    </cofactor>
    <text evidence="1">Binds 1 FAD per subunit.</text>
</comment>
<comment type="subcellular location">
    <subcellularLocation>
        <location evidence="1">Cytoplasm</location>
    </subcellularLocation>
</comment>
<comment type="similarity">
    <text evidence="1">Belongs to the class-I pyridine nucleotide-disulfide oxidoreductase family.</text>
</comment>
<gene>
    <name evidence="1" type="primary">sthA</name>
    <name evidence="1" type="synonym">udhA</name>
    <name type="ordered locus">E2348C_4276</name>
</gene>
<keyword id="KW-0963">Cytoplasm</keyword>
<keyword id="KW-0274">FAD</keyword>
<keyword id="KW-0285">Flavoprotein</keyword>
<keyword id="KW-0520">NAD</keyword>
<keyword id="KW-0521">NADP</keyword>
<keyword id="KW-0560">Oxidoreductase</keyword>
<keyword id="KW-1185">Reference proteome</keyword>
<proteinExistence type="inferred from homology"/>
<feature type="chain" id="PRO_1000193450" description="Soluble pyridine nucleotide transhydrogenase">
    <location>
        <begin position="1"/>
        <end position="466"/>
    </location>
</feature>
<feature type="binding site" evidence="1">
    <location>
        <begin position="36"/>
        <end position="45"/>
    </location>
    <ligand>
        <name>FAD</name>
        <dbReference type="ChEBI" id="CHEBI:57692"/>
    </ligand>
</feature>
<dbReference type="EC" id="1.6.1.1" evidence="1"/>
<dbReference type="EMBL" id="FM180568">
    <property type="protein sequence ID" value="CAS11824.1"/>
    <property type="molecule type" value="Genomic_DNA"/>
</dbReference>
<dbReference type="RefSeq" id="WP_001120802.1">
    <property type="nucleotide sequence ID" value="NC_011601.1"/>
</dbReference>
<dbReference type="SMR" id="B7UNU0"/>
<dbReference type="KEGG" id="ecg:E2348C_4276"/>
<dbReference type="HOGENOM" id="CLU_016755_0_0_6"/>
<dbReference type="Proteomes" id="UP000008205">
    <property type="component" value="Chromosome"/>
</dbReference>
<dbReference type="GO" id="GO:0005829">
    <property type="term" value="C:cytosol"/>
    <property type="evidence" value="ECO:0007669"/>
    <property type="project" value="TreeGrafter"/>
</dbReference>
<dbReference type="GO" id="GO:0004148">
    <property type="term" value="F:dihydrolipoyl dehydrogenase (NADH) activity"/>
    <property type="evidence" value="ECO:0007669"/>
    <property type="project" value="TreeGrafter"/>
</dbReference>
<dbReference type="GO" id="GO:0050660">
    <property type="term" value="F:flavin adenine dinucleotide binding"/>
    <property type="evidence" value="ECO:0007669"/>
    <property type="project" value="TreeGrafter"/>
</dbReference>
<dbReference type="GO" id="GO:0003957">
    <property type="term" value="F:NAD(P)+ transhydrogenase (Si-specific) activity"/>
    <property type="evidence" value="ECO:0007669"/>
    <property type="project" value="UniProtKB-UniRule"/>
</dbReference>
<dbReference type="GO" id="GO:0006103">
    <property type="term" value="P:2-oxoglutarate metabolic process"/>
    <property type="evidence" value="ECO:0007669"/>
    <property type="project" value="TreeGrafter"/>
</dbReference>
<dbReference type="GO" id="GO:0006739">
    <property type="term" value="P:NADP metabolic process"/>
    <property type="evidence" value="ECO:0007669"/>
    <property type="project" value="UniProtKB-UniRule"/>
</dbReference>
<dbReference type="FunFam" id="3.30.390.30:FF:000002">
    <property type="entry name" value="Soluble pyridine nucleotide transhydrogenase"/>
    <property type="match status" value="1"/>
</dbReference>
<dbReference type="FunFam" id="3.50.50.60:FF:000008">
    <property type="entry name" value="Soluble pyridine nucleotide transhydrogenase"/>
    <property type="match status" value="1"/>
</dbReference>
<dbReference type="Gene3D" id="3.30.390.30">
    <property type="match status" value="1"/>
</dbReference>
<dbReference type="Gene3D" id="3.50.50.60">
    <property type="entry name" value="FAD/NAD(P)-binding domain"/>
    <property type="match status" value="2"/>
</dbReference>
<dbReference type="HAMAP" id="MF_00247">
    <property type="entry name" value="SthA"/>
    <property type="match status" value="1"/>
</dbReference>
<dbReference type="InterPro" id="IPR050151">
    <property type="entry name" value="Class-I_Pyr_Nuc-Dis_Oxidored"/>
</dbReference>
<dbReference type="InterPro" id="IPR036188">
    <property type="entry name" value="FAD/NAD-bd_sf"/>
</dbReference>
<dbReference type="InterPro" id="IPR023753">
    <property type="entry name" value="FAD/NAD-binding_dom"/>
</dbReference>
<dbReference type="InterPro" id="IPR016156">
    <property type="entry name" value="FAD/NAD-linked_Rdtase_dimer_sf"/>
</dbReference>
<dbReference type="InterPro" id="IPR001100">
    <property type="entry name" value="Pyr_nuc-diS_OxRdtase"/>
</dbReference>
<dbReference type="InterPro" id="IPR004099">
    <property type="entry name" value="Pyr_nucl-diS_OxRdtase_dimer"/>
</dbReference>
<dbReference type="InterPro" id="IPR022962">
    <property type="entry name" value="STH_gammaproteobact"/>
</dbReference>
<dbReference type="NCBIfam" id="NF003585">
    <property type="entry name" value="PRK05249.1"/>
    <property type="match status" value="1"/>
</dbReference>
<dbReference type="PANTHER" id="PTHR22912">
    <property type="entry name" value="DISULFIDE OXIDOREDUCTASE"/>
    <property type="match status" value="1"/>
</dbReference>
<dbReference type="PANTHER" id="PTHR22912:SF93">
    <property type="entry name" value="SOLUBLE PYRIDINE NUCLEOTIDE TRANSHYDROGENASE"/>
    <property type="match status" value="1"/>
</dbReference>
<dbReference type="Pfam" id="PF07992">
    <property type="entry name" value="Pyr_redox_2"/>
    <property type="match status" value="1"/>
</dbReference>
<dbReference type="Pfam" id="PF02852">
    <property type="entry name" value="Pyr_redox_dim"/>
    <property type="match status" value="1"/>
</dbReference>
<dbReference type="PIRSF" id="PIRSF000350">
    <property type="entry name" value="Mercury_reductase_MerA"/>
    <property type="match status" value="1"/>
</dbReference>
<dbReference type="PRINTS" id="PR00368">
    <property type="entry name" value="FADPNR"/>
</dbReference>
<dbReference type="PRINTS" id="PR00411">
    <property type="entry name" value="PNDRDTASEI"/>
</dbReference>
<dbReference type="SUPFAM" id="SSF51905">
    <property type="entry name" value="FAD/NAD(P)-binding domain"/>
    <property type="match status" value="1"/>
</dbReference>
<dbReference type="SUPFAM" id="SSF55424">
    <property type="entry name" value="FAD/NAD-linked reductases, dimerisation (C-terminal) domain"/>
    <property type="match status" value="1"/>
</dbReference>
<protein>
    <recommendedName>
        <fullName evidence="1">Soluble pyridine nucleotide transhydrogenase</fullName>
        <shortName evidence="1">STH</shortName>
        <ecNumber evidence="1">1.6.1.1</ecNumber>
    </recommendedName>
    <alternativeName>
        <fullName evidence="1">NAD(P)(+) transhydrogenase [B-specific]</fullName>
    </alternativeName>
</protein>
<evidence type="ECO:0000255" key="1">
    <source>
        <dbReference type="HAMAP-Rule" id="MF_00247"/>
    </source>
</evidence>
<reference key="1">
    <citation type="journal article" date="2009" name="J. Bacteriol.">
        <title>Complete genome sequence and comparative genome analysis of enteropathogenic Escherichia coli O127:H6 strain E2348/69.</title>
        <authorList>
            <person name="Iguchi A."/>
            <person name="Thomson N.R."/>
            <person name="Ogura Y."/>
            <person name="Saunders D."/>
            <person name="Ooka T."/>
            <person name="Henderson I.R."/>
            <person name="Harris D."/>
            <person name="Asadulghani M."/>
            <person name="Kurokawa K."/>
            <person name="Dean P."/>
            <person name="Kenny B."/>
            <person name="Quail M.A."/>
            <person name="Thurston S."/>
            <person name="Dougan G."/>
            <person name="Hayashi T."/>
            <person name="Parkhill J."/>
            <person name="Frankel G."/>
        </authorList>
    </citation>
    <scope>NUCLEOTIDE SEQUENCE [LARGE SCALE GENOMIC DNA]</scope>
    <source>
        <strain>E2348/69 / EPEC</strain>
    </source>
</reference>
<accession>B7UNU0</accession>
<sequence length="466" mass="51556">MPHSYDYDAIVIGSGPGGEGAAMGLVKQGARVAVIERYQNVGGGCTHWGTIPSKALRHAVSRIIEFNQNPLYSDHSRLLRSSFADILNHADNVINQQTRMRQGFYERNHCEILQGNARFVDEHTLALDCPDGSVETLTAEKFVIACGSRPYHPTDVDFPHPRIYDSDSILSMHHEPRHVLIYGAGVIGCEYASIFRGMDVKVDLINTRDRLLAFLDQEMSDSLSYHFWNSGVVIRHNEEYEKIEGCDDGVIMHLKSGKKLKADCLLYANGRTGNTDSLALQNIGLETDSRGQLKVNSMYQTAQPHVYAVGDVIGYPSLASAAYDQGRIAAQALVKGEATAHLIEDIPTGIYTIPEISSVGKTEQQLTAMKVPYEVGRAQFKHLARAQIVGMNVGTLKILFHRETKEILGIHCFGERAAEIIHIGQAIMEQKGGGNTIEYFVNTTFNYPTMAEAYRVAALNGLNRLF</sequence>
<name>STHA_ECO27</name>
<organism>
    <name type="scientific">Escherichia coli O127:H6 (strain E2348/69 / EPEC)</name>
    <dbReference type="NCBI Taxonomy" id="574521"/>
    <lineage>
        <taxon>Bacteria</taxon>
        <taxon>Pseudomonadati</taxon>
        <taxon>Pseudomonadota</taxon>
        <taxon>Gammaproteobacteria</taxon>
        <taxon>Enterobacterales</taxon>
        <taxon>Enterobacteriaceae</taxon>
        <taxon>Escherichia</taxon>
    </lineage>
</organism>